<comment type="function">
    <text evidence="1">Methyltransferase required for the conversion of demethylmenaquinol (DMKH2) to menaquinol (MKH2) and the conversion of 2-polyprenyl-6-methoxy-1,4-benzoquinol (DDMQH2) to 2-polyprenyl-3-methyl-6-methoxy-1,4-benzoquinol (DMQH2).</text>
</comment>
<comment type="catalytic activity">
    <reaction evidence="1">
        <text>a 2-demethylmenaquinol + S-adenosyl-L-methionine = a menaquinol + S-adenosyl-L-homocysteine + H(+)</text>
        <dbReference type="Rhea" id="RHEA:42640"/>
        <dbReference type="Rhea" id="RHEA-COMP:9539"/>
        <dbReference type="Rhea" id="RHEA-COMP:9563"/>
        <dbReference type="ChEBI" id="CHEBI:15378"/>
        <dbReference type="ChEBI" id="CHEBI:18151"/>
        <dbReference type="ChEBI" id="CHEBI:55437"/>
        <dbReference type="ChEBI" id="CHEBI:57856"/>
        <dbReference type="ChEBI" id="CHEBI:59789"/>
        <dbReference type="EC" id="2.1.1.163"/>
    </reaction>
</comment>
<comment type="catalytic activity">
    <reaction evidence="1">
        <text>a 2-methoxy-6-(all-trans-polyprenyl)benzene-1,4-diol + S-adenosyl-L-methionine = a 5-methoxy-2-methyl-3-(all-trans-polyprenyl)benzene-1,4-diol + S-adenosyl-L-homocysteine + H(+)</text>
        <dbReference type="Rhea" id="RHEA:28286"/>
        <dbReference type="Rhea" id="RHEA-COMP:10858"/>
        <dbReference type="Rhea" id="RHEA-COMP:10859"/>
        <dbReference type="ChEBI" id="CHEBI:15378"/>
        <dbReference type="ChEBI" id="CHEBI:57856"/>
        <dbReference type="ChEBI" id="CHEBI:59789"/>
        <dbReference type="ChEBI" id="CHEBI:84166"/>
        <dbReference type="ChEBI" id="CHEBI:84167"/>
        <dbReference type="EC" id="2.1.1.201"/>
    </reaction>
</comment>
<comment type="pathway">
    <text evidence="1">Quinol/quinone metabolism; menaquinone biosynthesis; menaquinol from 1,4-dihydroxy-2-naphthoate: step 2/2.</text>
</comment>
<comment type="pathway">
    <text evidence="1">Cofactor biosynthesis; ubiquinone biosynthesis.</text>
</comment>
<comment type="similarity">
    <text evidence="1">Belongs to the class I-like SAM-binding methyltransferase superfamily. MenG/UbiE family.</text>
</comment>
<dbReference type="EC" id="2.1.1.163" evidence="1"/>
<dbReference type="EC" id="2.1.1.201" evidence="1"/>
<dbReference type="EMBL" id="CP000458">
    <property type="protein sequence ID" value="ABK09482.1"/>
    <property type="molecule type" value="Genomic_DNA"/>
</dbReference>
<dbReference type="RefSeq" id="WP_011546189.1">
    <property type="nucleotide sequence ID" value="NC_008542.1"/>
</dbReference>
<dbReference type="SMR" id="A0KAF5"/>
<dbReference type="KEGG" id="bch:Bcen2424_2732"/>
<dbReference type="HOGENOM" id="CLU_037990_0_0_4"/>
<dbReference type="UniPathway" id="UPA00079">
    <property type="reaction ID" value="UER00169"/>
</dbReference>
<dbReference type="UniPathway" id="UPA00232"/>
<dbReference type="GO" id="GO:0008425">
    <property type="term" value="F:2-methoxy-6-polyprenyl-1,4-benzoquinol methyltransferase activity"/>
    <property type="evidence" value="ECO:0007669"/>
    <property type="project" value="UniProtKB-UniRule"/>
</dbReference>
<dbReference type="GO" id="GO:0043770">
    <property type="term" value="F:demethylmenaquinone methyltransferase activity"/>
    <property type="evidence" value="ECO:0007669"/>
    <property type="project" value="UniProtKB-UniRule"/>
</dbReference>
<dbReference type="GO" id="GO:0009060">
    <property type="term" value="P:aerobic respiration"/>
    <property type="evidence" value="ECO:0007669"/>
    <property type="project" value="UniProtKB-UniRule"/>
</dbReference>
<dbReference type="GO" id="GO:0009234">
    <property type="term" value="P:menaquinone biosynthetic process"/>
    <property type="evidence" value="ECO:0007669"/>
    <property type="project" value="UniProtKB-UniRule"/>
</dbReference>
<dbReference type="GO" id="GO:0032259">
    <property type="term" value="P:methylation"/>
    <property type="evidence" value="ECO:0007669"/>
    <property type="project" value="UniProtKB-KW"/>
</dbReference>
<dbReference type="CDD" id="cd02440">
    <property type="entry name" value="AdoMet_MTases"/>
    <property type="match status" value="1"/>
</dbReference>
<dbReference type="Gene3D" id="3.40.50.150">
    <property type="entry name" value="Vaccinia Virus protein VP39"/>
    <property type="match status" value="1"/>
</dbReference>
<dbReference type="HAMAP" id="MF_01813">
    <property type="entry name" value="MenG_UbiE_methyltr"/>
    <property type="match status" value="1"/>
</dbReference>
<dbReference type="InterPro" id="IPR029063">
    <property type="entry name" value="SAM-dependent_MTases_sf"/>
</dbReference>
<dbReference type="InterPro" id="IPR004033">
    <property type="entry name" value="UbiE/COQ5_MeTrFase"/>
</dbReference>
<dbReference type="InterPro" id="IPR023576">
    <property type="entry name" value="UbiE/COQ5_MeTrFase_CS"/>
</dbReference>
<dbReference type="NCBIfam" id="TIGR01934">
    <property type="entry name" value="MenG_MenH_UbiE"/>
    <property type="match status" value="1"/>
</dbReference>
<dbReference type="NCBIfam" id="NF001240">
    <property type="entry name" value="PRK00216.1-1"/>
    <property type="match status" value="1"/>
</dbReference>
<dbReference type="PANTHER" id="PTHR43591:SF24">
    <property type="entry name" value="2-METHOXY-6-POLYPRENYL-1,4-BENZOQUINOL METHYLASE, MITOCHONDRIAL"/>
    <property type="match status" value="1"/>
</dbReference>
<dbReference type="PANTHER" id="PTHR43591">
    <property type="entry name" value="METHYLTRANSFERASE"/>
    <property type="match status" value="1"/>
</dbReference>
<dbReference type="Pfam" id="PF01209">
    <property type="entry name" value="Ubie_methyltran"/>
    <property type="match status" value="1"/>
</dbReference>
<dbReference type="SUPFAM" id="SSF53335">
    <property type="entry name" value="S-adenosyl-L-methionine-dependent methyltransferases"/>
    <property type="match status" value="1"/>
</dbReference>
<dbReference type="PROSITE" id="PS51608">
    <property type="entry name" value="SAM_MT_UBIE"/>
    <property type="match status" value="1"/>
</dbReference>
<dbReference type="PROSITE" id="PS01183">
    <property type="entry name" value="UBIE_1"/>
    <property type="match status" value="1"/>
</dbReference>
<dbReference type="PROSITE" id="PS01184">
    <property type="entry name" value="UBIE_2"/>
    <property type="match status" value="1"/>
</dbReference>
<gene>
    <name evidence="1" type="primary">ubiE</name>
    <name type="ordered locus">Bcen2424_2732</name>
</gene>
<keyword id="KW-0474">Menaquinone biosynthesis</keyword>
<keyword id="KW-0489">Methyltransferase</keyword>
<keyword id="KW-0949">S-adenosyl-L-methionine</keyword>
<keyword id="KW-0808">Transferase</keyword>
<keyword id="KW-0831">Ubiquinone biosynthesis</keyword>
<accession>A0KAF5</accession>
<protein>
    <recommendedName>
        <fullName evidence="1">Ubiquinone/menaquinone biosynthesis C-methyltransferase UbiE</fullName>
        <ecNumber evidence="1">2.1.1.163</ecNumber>
        <ecNumber evidence="1">2.1.1.201</ecNumber>
    </recommendedName>
    <alternativeName>
        <fullName evidence="1">2-methoxy-6-polyprenyl-1,4-benzoquinol methylase</fullName>
    </alternativeName>
    <alternativeName>
        <fullName evidence="1">Demethylmenaquinone methyltransferase</fullName>
    </alternativeName>
</protein>
<proteinExistence type="inferred from homology"/>
<evidence type="ECO:0000255" key="1">
    <source>
        <dbReference type="HAMAP-Rule" id="MF_01813"/>
    </source>
</evidence>
<organism>
    <name type="scientific">Burkholderia cenocepacia (strain HI2424)</name>
    <dbReference type="NCBI Taxonomy" id="331272"/>
    <lineage>
        <taxon>Bacteria</taxon>
        <taxon>Pseudomonadati</taxon>
        <taxon>Pseudomonadota</taxon>
        <taxon>Betaproteobacteria</taxon>
        <taxon>Burkholderiales</taxon>
        <taxon>Burkholderiaceae</taxon>
        <taxon>Burkholderia</taxon>
        <taxon>Burkholderia cepacia complex</taxon>
    </lineage>
</organism>
<sequence length="243" mass="27107">MSKTHFGFESVEENEKAKKVAGVFHSVASNYDLMNDLMSAGMHRAWKAFTIAQANVRPGFKVLDIAAGTGDLTKSFAKAAGPTGEVWHTDINESMLRVGRDRLLDKGIVTPSLLCDAEKIPFPDNYFDVVTVAFGLRNMTHKDAALAEMRRVTKPGGRVMVLEFSKVWDPLKKAYDLYSFKVLPWLGDKFAKDAESYRYLAESIRMHPDQDTLKTMMEQAGLDAVKYYNLSGGVVALHLGTKY</sequence>
<feature type="chain" id="PRO_1000056226" description="Ubiquinone/menaquinone biosynthesis C-methyltransferase UbiE">
    <location>
        <begin position="1"/>
        <end position="243"/>
    </location>
</feature>
<feature type="binding site" evidence="1">
    <location>
        <position position="69"/>
    </location>
    <ligand>
        <name>S-adenosyl-L-methionine</name>
        <dbReference type="ChEBI" id="CHEBI:59789"/>
    </ligand>
</feature>
<feature type="binding site" evidence="1">
    <location>
        <position position="90"/>
    </location>
    <ligand>
        <name>S-adenosyl-L-methionine</name>
        <dbReference type="ChEBI" id="CHEBI:59789"/>
    </ligand>
</feature>
<feature type="binding site" evidence="1">
    <location>
        <begin position="116"/>
        <end position="117"/>
    </location>
    <ligand>
        <name>S-adenosyl-L-methionine</name>
        <dbReference type="ChEBI" id="CHEBI:59789"/>
    </ligand>
</feature>
<reference key="1">
    <citation type="submission" date="2006-08" db="EMBL/GenBank/DDBJ databases">
        <title>Complete sequence of chromosome 1 of Burkholderia cenocepacia HI2424.</title>
        <authorList>
            <person name="Copeland A."/>
            <person name="Lucas S."/>
            <person name="Lapidus A."/>
            <person name="Barry K."/>
            <person name="Detter J.C."/>
            <person name="Glavina del Rio T."/>
            <person name="Hammon N."/>
            <person name="Israni S."/>
            <person name="Pitluck S."/>
            <person name="Chain P."/>
            <person name="Malfatti S."/>
            <person name="Shin M."/>
            <person name="Vergez L."/>
            <person name="Schmutz J."/>
            <person name="Larimer F."/>
            <person name="Land M."/>
            <person name="Hauser L."/>
            <person name="Kyrpides N."/>
            <person name="Kim E."/>
            <person name="LiPuma J.J."/>
            <person name="Gonzalez C.F."/>
            <person name="Konstantinidis K."/>
            <person name="Tiedje J.M."/>
            <person name="Richardson P."/>
        </authorList>
    </citation>
    <scope>NUCLEOTIDE SEQUENCE [LARGE SCALE GENOMIC DNA]</scope>
    <source>
        <strain>HI2424</strain>
    </source>
</reference>
<name>UBIE_BURCH</name>